<dbReference type="EC" id="2.7.11.1"/>
<dbReference type="EMBL" id="AL021633">
    <property type="protein sequence ID" value="CAA16528.1"/>
    <property type="status" value="ALT_SEQ"/>
    <property type="molecule type" value="Genomic_DNA"/>
</dbReference>
<dbReference type="EMBL" id="AL161578">
    <property type="protein sequence ID" value="CAB79843.1"/>
    <property type="status" value="ALT_SEQ"/>
    <property type="molecule type" value="Genomic_DNA"/>
</dbReference>
<dbReference type="EMBL" id="CP002687">
    <property type="protein sequence ID" value="AEE85882.1"/>
    <property type="molecule type" value="Genomic_DNA"/>
</dbReference>
<dbReference type="EMBL" id="AK176198">
    <property type="protein sequence ID" value="BAD43961.1"/>
    <property type="molecule type" value="mRNA"/>
</dbReference>
<dbReference type="EMBL" id="AK176233">
    <property type="protein sequence ID" value="BAD43996.1"/>
    <property type="molecule type" value="mRNA"/>
</dbReference>
<dbReference type="EMBL" id="AK176245">
    <property type="protein sequence ID" value="BAD44008.1"/>
    <property type="molecule type" value="mRNA"/>
</dbReference>
<dbReference type="EMBL" id="AK176283">
    <property type="protein sequence ID" value="BAD44046.1"/>
    <property type="molecule type" value="mRNA"/>
</dbReference>
<dbReference type="EMBL" id="AK176290">
    <property type="protein sequence ID" value="BAD44053.1"/>
    <property type="molecule type" value="mRNA"/>
</dbReference>
<dbReference type="EMBL" id="AK176304">
    <property type="protein sequence ID" value="BAD44067.1"/>
    <property type="molecule type" value="mRNA"/>
</dbReference>
<dbReference type="EMBL" id="AK176329">
    <property type="protein sequence ID" value="BAD44092.1"/>
    <property type="molecule type" value="mRNA"/>
</dbReference>
<dbReference type="EMBL" id="AK221228">
    <property type="protein sequence ID" value="BAD93819.1"/>
    <property type="molecule type" value="mRNA"/>
</dbReference>
<dbReference type="EMBL" id="AK228286">
    <property type="protein sequence ID" value="BAF00232.1"/>
    <property type="molecule type" value="mRNA"/>
</dbReference>
<dbReference type="EMBL" id="FJ708761">
    <property type="protein sequence ID" value="ACN59354.1"/>
    <property type="molecule type" value="mRNA"/>
</dbReference>
<dbReference type="PIR" id="T04492">
    <property type="entry name" value="T04492"/>
</dbReference>
<dbReference type="RefSeq" id="NP_567870.1">
    <molecule id="C0LGR9-1"/>
    <property type="nucleotide sequence ID" value="NM_119274.5"/>
</dbReference>
<dbReference type="SMR" id="C0LGR9"/>
<dbReference type="BioGRID" id="14538">
    <property type="interactions" value="64"/>
</dbReference>
<dbReference type="IntAct" id="C0LGR9">
    <property type="interactions" value="67"/>
</dbReference>
<dbReference type="STRING" id="3702.C0LGR9"/>
<dbReference type="GlyGen" id="C0LGR9">
    <property type="glycosylation" value="5 sites"/>
</dbReference>
<dbReference type="iPTMnet" id="C0LGR9"/>
<dbReference type="PaxDb" id="3702-AT4G31250.1"/>
<dbReference type="ProteomicsDB" id="242876">
    <molecule id="C0LGR9-1"/>
</dbReference>
<dbReference type="EnsemblPlants" id="AT4G31250.1">
    <molecule id="C0LGR9-1"/>
    <property type="protein sequence ID" value="AT4G31250.1"/>
    <property type="gene ID" value="AT4G31250"/>
</dbReference>
<dbReference type="GeneID" id="829252"/>
<dbReference type="Gramene" id="AT4G31250.1">
    <molecule id="C0LGR9-1"/>
    <property type="protein sequence ID" value="AT4G31250.1"/>
    <property type="gene ID" value="AT4G31250"/>
</dbReference>
<dbReference type="KEGG" id="ath:AT4G31250"/>
<dbReference type="Araport" id="AT4G31250"/>
<dbReference type="TAIR" id="AT4G31250">
    <property type="gene designation" value="PRK7"/>
</dbReference>
<dbReference type="eggNOG" id="ENOG502QUJJ">
    <property type="taxonomic scope" value="Eukaryota"/>
</dbReference>
<dbReference type="HOGENOM" id="CLU_000288_92_6_1"/>
<dbReference type="InParanoid" id="C0LGR9"/>
<dbReference type="OMA" id="CCESSVE"/>
<dbReference type="PhylomeDB" id="C0LGR9"/>
<dbReference type="PRO" id="PR:C0LGR9"/>
<dbReference type="Proteomes" id="UP000006548">
    <property type="component" value="Chromosome 4"/>
</dbReference>
<dbReference type="ExpressionAtlas" id="C0LGR9">
    <property type="expression patterns" value="baseline and differential"/>
</dbReference>
<dbReference type="GO" id="GO:0016020">
    <property type="term" value="C:membrane"/>
    <property type="evidence" value="ECO:0007669"/>
    <property type="project" value="UniProtKB-SubCell"/>
</dbReference>
<dbReference type="GO" id="GO:0005524">
    <property type="term" value="F:ATP binding"/>
    <property type="evidence" value="ECO:0007669"/>
    <property type="project" value="UniProtKB-KW"/>
</dbReference>
<dbReference type="GO" id="GO:0106310">
    <property type="term" value="F:protein serine kinase activity"/>
    <property type="evidence" value="ECO:0007669"/>
    <property type="project" value="RHEA"/>
</dbReference>
<dbReference type="GO" id="GO:0004674">
    <property type="term" value="F:protein serine/threonine kinase activity"/>
    <property type="evidence" value="ECO:0007669"/>
    <property type="project" value="UniProtKB-KW"/>
</dbReference>
<dbReference type="FunFam" id="3.80.10.10:FF:000400">
    <property type="entry name" value="Nuclear pore complex protein NUP107"/>
    <property type="match status" value="1"/>
</dbReference>
<dbReference type="FunFam" id="3.30.200.20:FF:000307">
    <property type="entry name" value="pollen receptor-like kinase 1"/>
    <property type="match status" value="1"/>
</dbReference>
<dbReference type="Gene3D" id="3.30.200.20">
    <property type="entry name" value="Phosphorylase Kinase, domain 1"/>
    <property type="match status" value="1"/>
</dbReference>
<dbReference type="Gene3D" id="3.80.10.10">
    <property type="entry name" value="Ribonuclease Inhibitor"/>
    <property type="match status" value="2"/>
</dbReference>
<dbReference type="Gene3D" id="1.10.510.10">
    <property type="entry name" value="Transferase(Phosphotransferase) domain 1"/>
    <property type="match status" value="1"/>
</dbReference>
<dbReference type="InterPro" id="IPR011009">
    <property type="entry name" value="Kinase-like_dom_sf"/>
</dbReference>
<dbReference type="InterPro" id="IPR001611">
    <property type="entry name" value="Leu-rich_rpt"/>
</dbReference>
<dbReference type="InterPro" id="IPR032675">
    <property type="entry name" value="LRR_dom_sf"/>
</dbReference>
<dbReference type="InterPro" id="IPR013210">
    <property type="entry name" value="LRR_N_plant-typ"/>
</dbReference>
<dbReference type="InterPro" id="IPR046959">
    <property type="entry name" value="PRK1-6/SRF4-like"/>
</dbReference>
<dbReference type="InterPro" id="IPR000719">
    <property type="entry name" value="Prot_kinase_dom"/>
</dbReference>
<dbReference type="PANTHER" id="PTHR48007">
    <property type="entry name" value="LEUCINE-RICH REPEAT RECEPTOR-LIKE PROTEIN KINASE PXC1"/>
    <property type="match status" value="1"/>
</dbReference>
<dbReference type="PANTHER" id="PTHR48007:SF66">
    <property type="entry name" value="PROTEIN KINASE DOMAIN-CONTAINING PROTEIN"/>
    <property type="match status" value="1"/>
</dbReference>
<dbReference type="Pfam" id="PF00560">
    <property type="entry name" value="LRR_1"/>
    <property type="match status" value="1"/>
</dbReference>
<dbReference type="Pfam" id="PF08263">
    <property type="entry name" value="LRRNT_2"/>
    <property type="match status" value="1"/>
</dbReference>
<dbReference type="Pfam" id="PF00069">
    <property type="entry name" value="Pkinase"/>
    <property type="match status" value="1"/>
</dbReference>
<dbReference type="SUPFAM" id="SSF52058">
    <property type="entry name" value="L domain-like"/>
    <property type="match status" value="1"/>
</dbReference>
<dbReference type="SUPFAM" id="SSF56112">
    <property type="entry name" value="Protein kinase-like (PK-like)"/>
    <property type="match status" value="1"/>
</dbReference>
<dbReference type="PROSITE" id="PS50011">
    <property type="entry name" value="PROTEIN_KINASE_DOM"/>
    <property type="match status" value="1"/>
</dbReference>
<evidence type="ECO:0000250" key="1">
    <source>
        <dbReference type="UniProtKB" id="Q94AG2"/>
    </source>
</evidence>
<evidence type="ECO:0000250" key="2">
    <source>
        <dbReference type="UniProtKB" id="Q94F62"/>
    </source>
</evidence>
<evidence type="ECO:0000255" key="3"/>
<evidence type="ECO:0000255" key="4">
    <source>
        <dbReference type="PROSITE-ProRule" id="PRU00159"/>
    </source>
</evidence>
<evidence type="ECO:0000256" key="5">
    <source>
        <dbReference type="SAM" id="MobiDB-lite"/>
    </source>
</evidence>
<evidence type="ECO:0000303" key="6">
    <source ref="3"/>
</evidence>
<evidence type="ECO:0000305" key="7"/>
<accession>C0LGR9</accession>
<accession>O49575</accession>
<accession>Q0WRL7</accession>
<accession>Q67Z85</accession>
<comment type="catalytic activity">
    <reaction>
        <text>L-seryl-[protein] + ATP = O-phospho-L-seryl-[protein] + ADP + H(+)</text>
        <dbReference type="Rhea" id="RHEA:17989"/>
        <dbReference type="Rhea" id="RHEA-COMP:9863"/>
        <dbReference type="Rhea" id="RHEA-COMP:11604"/>
        <dbReference type="ChEBI" id="CHEBI:15378"/>
        <dbReference type="ChEBI" id="CHEBI:29999"/>
        <dbReference type="ChEBI" id="CHEBI:30616"/>
        <dbReference type="ChEBI" id="CHEBI:83421"/>
        <dbReference type="ChEBI" id="CHEBI:456216"/>
        <dbReference type="EC" id="2.7.11.1"/>
    </reaction>
</comment>
<comment type="catalytic activity">
    <reaction>
        <text>L-threonyl-[protein] + ATP = O-phospho-L-threonyl-[protein] + ADP + H(+)</text>
        <dbReference type="Rhea" id="RHEA:46608"/>
        <dbReference type="Rhea" id="RHEA-COMP:11060"/>
        <dbReference type="Rhea" id="RHEA-COMP:11605"/>
        <dbReference type="ChEBI" id="CHEBI:15378"/>
        <dbReference type="ChEBI" id="CHEBI:30013"/>
        <dbReference type="ChEBI" id="CHEBI:30616"/>
        <dbReference type="ChEBI" id="CHEBI:61977"/>
        <dbReference type="ChEBI" id="CHEBI:456216"/>
        <dbReference type="EC" id="2.7.11.1"/>
    </reaction>
</comment>
<comment type="interaction">
    <interactant intactId="EBI-16955262">
        <id>C0LGR9</id>
    </interactant>
    <interactant intactId="EBI-20657656">
        <id>C0LGH8</id>
        <label>At1g63430</label>
    </interactant>
    <organismsDiffer>false</organismsDiffer>
    <experiments>2</experiments>
</comment>
<comment type="interaction">
    <interactant intactId="EBI-16955262">
        <id>C0LGR9</id>
    </interactant>
    <interactant intactId="EBI-20654480">
        <id>C0LGR6</id>
        <label>At4g29180</label>
    </interactant>
    <organismsDiffer>false</organismsDiffer>
    <experiments>2</experiments>
</comment>
<comment type="interaction">
    <interactant intactId="EBI-16955262">
        <id>C0LGR9</id>
    </interactant>
    <interactant intactId="EBI-20661274">
        <id>A0A178UAF6</id>
        <label>AXX17_At5g67350</label>
    </interactant>
    <organismsDiffer>false</organismsDiffer>
    <experiments>2</experiments>
</comment>
<comment type="interaction">
    <interactant intactId="EBI-16955262">
        <id>C0LGR9</id>
    </interactant>
    <interactant intactId="EBI-20652612">
        <id>Q9FZ59</id>
        <label>PEPR2</label>
    </interactant>
    <organismsDiffer>false</organismsDiffer>
    <experiments>2</experiments>
</comment>
<comment type="interaction">
    <interactant intactId="EBI-16955262">
        <id>C0LGR9</id>
    </interactant>
    <interactant intactId="EBI-16905883">
        <id>Q9SKB2</id>
        <label>SOBIR1</label>
    </interactant>
    <organismsDiffer>false</organismsDiffer>
    <experiments>2</experiments>
</comment>
<comment type="interaction">
    <interactant intactId="EBI-16955262">
        <id>C0LGR9</id>
    </interactant>
    <interactant intactId="EBI-2023970">
        <id>P43298</id>
        <label>TMK1</label>
    </interactant>
    <organismsDiffer>false</organismsDiffer>
    <experiments>2</experiments>
</comment>
<comment type="subcellular location">
    <subcellularLocation>
        <location evidence="7">Membrane</location>
        <topology evidence="7">Single-pass type I membrane protein</topology>
    </subcellularLocation>
</comment>
<comment type="alternative products">
    <event type="alternative splicing"/>
    <isoform>
        <id>C0LGR9-1</id>
        <name>1</name>
        <sequence type="displayed"/>
    </isoform>
    <isoform>
        <id>C0LGR9-2</id>
        <name>2</name>
        <sequence type="described" ref="VSP_038293 VSP_038294"/>
    </isoform>
</comment>
<comment type="similarity">
    <text evidence="4">Belongs to the protein kinase superfamily. Ser/Thr protein kinase family.</text>
</comment>
<comment type="sequence caution" evidence="7">
    <conflict type="erroneous gene model prediction">
        <sequence resource="EMBL-CDS" id="CAA16528"/>
    </conflict>
</comment>
<comment type="sequence caution" evidence="7">
    <conflict type="erroneous gene model prediction">
        <sequence resource="EMBL-CDS" id="CAB79843"/>
    </conflict>
</comment>
<protein>
    <recommendedName>
        <fullName>Probable LRR receptor-like serine/threonine-protein kinase At4g31250</fullName>
        <ecNumber>2.7.11.1</ecNumber>
    </recommendedName>
</protein>
<keyword id="KW-0025">Alternative splicing</keyword>
<keyword id="KW-0067">ATP-binding</keyword>
<keyword id="KW-0325">Glycoprotein</keyword>
<keyword id="KW-0418">Kinase</keyword>
<keyword id="KW-0433">Leucine-rich repeat</keyword>
<keyword id="KW-0472">Membrane</keyword>
<keyword id="KW-0547">Nucleotide-binding</keyword>
<keyword id="KW-0597">Phosphoprotein</keyword>
<keyword id="KW-0675">Receptor</keyword>
<keyword id="KW-1185">Reference proteome</keyword>
<keyword id="KW-0677">Repeat</keyword>
<keyword id="KW-0723">Serine/threonine-protein kinase</keyword>
<keyword id="KW-0732">Signal</keyword>
<keyword id="KW-0808">Transferase</keyword>
<keyword id="KW-0812">Transmembrane</keyword>
<keyword id="KW-1133">Transmembrane helix</keyword>
<feature type="signal peptide" evidence="3">
    <location>
        <begin position="1"/>
        <end position="26"/>
    </location>
</feature>
<feature type="chain" id="PRO_0000387556" description="Probable LRR receptor-like serine/threonine-protein kinase At4g31250">
    <location>
        <begin position="27"/>
        <end position="676"/>
    </location>
</feature>
<feature type="topological domain" description="Extracellular" evidence="3">
    <location>
        <begin position="27"/>
        <end position="242"/>
    </location>
</feature>
<feature type="transmembrane region" description="Helical" evidence="3">
    <location>
        <begin position="243"/>
        <end position="263"/>
    </location>
</feature>
<feature type="topological domain" description="Cytoplasmic" evidence="3">
    <location>
        <begin position="264"/>
        <end position="676"/>
    </location>
</feature>
<feature type="repeat" description="LRR 1">
    <location>
        <begin position="98"/>
        <end position="122"/>
    </location>
</feature>
<feature type="repeat" description="LRR 2">
    <location>
        <begin position="123"/>
        <end position="146"/>
    </location>
</feature>
<feature type="repeat" description="LRR 3">
    <location>
        <begin position="148"/>
        <end position="171"/>
    </location>
</feature>
<feature type="repeat" description="LRR 4">
    <location>
        <begin position="172"/>
        <end position="195"/>
    </location>
</feature>
<feature type="repeat" description="LRR 5">
    <location>
        <begin position="197"/>
        <end position="218"/>
    </location>
</feature>
<feature type="domain" description="Protein kinase" evidence="4">
    <location>
        <begin position="366"/>
        <end position="640"/>
    </location>
</feature>
<feature type="region of interest" description="Disordered" evidence="5">
    <location>
        <begin position="319"/>
        <end position="347"/>
    </location>
</feature>
<feature type="region of interest" description="Disordered" evidence="5">
    <location>
        <begin position="641"/>
        <end position="676"/>
    </location>
</feature>
<feature type="compositionally biased region" description="Polar residues" evidence="5">
    <location>
        <begin position="319"/>
        <end position="330"/>
    </location>
</feature>
<feature type="binding site" evidence="4">
    <location>
        <begin position="372"/>
        <end position="380"/>
    </location>
    <ligand>
        <name>ATP</name>
        <dbReference type="ChEBI" id="CHEBI:30616"/>
    </ligand>
</feature>
<feature type="binding site" evidence="4">
    <location>
        <position position="394"/>
    </location>
    <ligand>
        <name>ATP</name>
        <dbReference type="ChEBI" id="CHEBI:30616"/>
    </ligand>
</feature>
<feature type="modified residue" description="Phosphoserine" evidence="2">
    <location>
        <position position="368"/>
    </location>
</feature>
<feature type="modified residue" description="Phosphoserine" evidence="1">
    <location>
        <position position="446"/>
    </location>
</feature>
<feature type="modified residue" description="Phosphoserine" evidence="1">
    <location>
        <position position="543"/>
    </location>
</feature>
<feature type="glycosylation site" description="N-linked (GlcNAc...) asparagine" evidence="3">
    <location>
        <position position="42"/>
    </location>
</feature>
<feature type="glycosylation site" description="N-linked (GlcNAc...) asparagine" evidence="3">
    <location>
        <position position="73"/>
    </location>
</feature>
<feature type="glycosylation site" description="N-linked (GlcNAc...) asparagine" evidence="3">
    <location>
        <position position="83"/>
    </location>
</feature>
<feature type="glycosylation site" description="N-linked (GlcNAc...) asparagine" evidence="3">
    <location>
        <position position="218"/>
    </location>
</feature>
<feature type="splice variant" id="VSP_038293" description="In isoform 2." evidence="6">
    <location>
        <begin position="1"/>
        <end position="88"/>
    </location>
</feature>
<feature type="splice variant" id="VSP_038294" description="In isoform 2." evidence="6">
    <original>ELDVQALGSI</original>
    <variation>MERSDVFKRL</variation>
    <location>
        <begin position="89"/>
        <end position="98"/>
    </location>
</feature>
<feature type="sequence conflict" description="In Ref. 3; BAF00232." evidence="7" ref="3">
    <original>DL</original>
    <variation>RI</variation>
    <location>
        <begin position="487"/>
        <end position="488"/>
    </location>
</feature>
<proteinExistence type="evidence at protein level"/>
<name>Y4312_ARATH</name>
<organism>
    <name type="scientific">Arabidopsis thaliana</name>
    <name type="common">Mouse-ear cress</name>
    <dbReference type="NCBI Taxonomy" id="3702"/>
    <lineage>
        <taxon>Eukaryota</taxon>
        <taxon>Viridiplantae</taxon>
        <taxon>Streptophyta</taxon>
        <taxon>Embryophyta</taxon>
        <taxon>Tracheophyta</taxon>
        <taxon>Spermatophyta</taxon>
        <taxon>Magnoliopsida</taxon>
        <taxon>eudicotyledons</taxon>
        <taxon>Gunneridae</taxon>
        <taxon>Pentapetalae</taxon>
        <taxon>rosids</taxon>
        <taxon>malvids</taxon>
        <taxon>Brassicales</taxon>
        <taxon>Brassicaceae</taxon>
        <taxon>Camelineae</taxon>
        <taxon>Arabidopsis</taxon>
    </lineage>
</organism>
<reference key="1">
    <citation type="journal article" date="1999" name="Nature">
        <title>Sequence and analysis of chromosome 4 of the plant Arabidopsis thaliana.</title>
        <authorList>
            <person name="Mayer K.F.X."/>
            <person name="Schueller C."/>
            <person name="Wambutt R."/>
            <person name="Murphy G."/>
            <person name="Volckaert G."/>
            <person name="Pohl T."/>
            <person name="Duesterhoeft A."/>
            <person name="Stiekema W."/>
            <person name="Entian K.-D."/>
            <person name="Terryn N."/>
            <person name="Harris B."/>
            <person name="Ansorge W."/>
            <person name="Brandt P."/>
            <person name="Grivell L.A."/>
            <person name="Rieger M."/>
            <person name="Weichselgartner M."/>
            <person name="de Simone V."/>
            <person name="Obermaier B."/>
            <person name="Mache R."/>
            <person name="Mueller M."/>
            <person name="Kreis M."/>
            <person name="Delseny M."/>
            <person name="Puigdomenech P."/>
            <person name="Watson M."/>
            <person name="Schmidtheini T."/>
            <person name="Reichert B."/>
            <person name="Portetelle D."/>
            <person name="Perez-Alonso M."/>
            <person name="Boutry M."/>
            <person name="Bancroft I."/>
            <person name="Vos P."/>
            <person name="Hoheisel J."/>
            <person name="Zimmermann W."/>
            <person name="Wedler H."/>
            <person name="Ridley P."/>
            <person name="Langham S.-A."/>
            <person name="McCullagh B."/>
            <person name="Bilham L."/>
            <person name="Robben J."/>
            <person name="van der Schueren J."/>
            <person name="Grymonprez B."/>
            <person name="Chuang Y.-J."/>
            <person name="Vandenbussche F."/>
            <person name="Braeken M."/>
            <person name="Weltjens I."/>
            <person name="Voet M."/>
            <person name="Bastiaens I."/>
            <person name="Aert R."/>
            <person name="Defoor E."/>
            <person name="Weitzenegger T."/>
            <person name="Bothe G."/>
            <person name="Ramsperger U."/>
            <person name="Hilbert H."/>
            <person name="Braun M."/>
            <person name="Holzer E."/>
            <person name="Brandt A."/>
            <person name="Peters S."/>
            <person name="van Staveren M."/>
            <person name="Dirkse W."/>
            <person name="Mooijman P."/>
            <person name="Klein Lankhorst R."/>
            <person name="Rose M."/>
            <person name="Hauf J."/>
            <person name="Koetter P."/>
            <person name="Berneiser S."/>
            <person name="Hempel S."/>
            <person name="Feldpausch M."/>
            <person name="Lamberth S."/>
            <person name="Van den Daele H."/>
            <person name="De Keyser A."/>
            <person name="Buysshaert C."/>
            <person name="Gielen J."/>
            <person name="Villarroel R."/>
            <person name="De Clercq R."/>
            <person name="van Montagu M."/>
            <person name="Rogers J."/>
            <person name="Cronin A."/>
            <person name="Quail M.A."/>
            <person name="Bray-Allen S."/>
            <person name="Clark L."/>
            <person name="Doggett J."/>
            <person name="Hall S."/>
            <person name="Kay M."/>
            <person name="Lennard N."/>
            <person name="McLay K."/>
            <person name="Mayes R."/>
            <person name="Pettett A."/>
            <person name="Rajandream M.A."/>
            <person name="Lyne M."/>
            <person name="Benes V."/>
            <person name="Rechmann S."/>
            <person name="Borkova D."/>
            <person name="Bloecker H."/>
            <person name="Scharfe M."/>
            <person name="Grimm M."/>
            <person name="Loehnert T.-H."/>
            <person name="Dose S."/>
            <person name="de Haan M."/>
            <person name="Maarse A.C."/>
            <person name="Schaefer M."/>
            <person name="Mueller-Auer S."/>
            <person name="Gabel C."/>
            <person name="Fuchs M."/>
            <person name="Fartmann B."/>
            <person name="Granderath K."/>
            <person name="Dauner D."/>
            <person name="Herzl A."/>
            <person name="Neumann S."/>
            <person name="Argiriou A."/>
            <person name="Vitale D."/>
            <person name="Liguori R."/>
            <person name="Piravandi E."/>
            <person name="Massenet O."/>
            <person name="Quigley F."/>
            <person name="Clabauld G."/>
            <person name="Muendlein A."/>
            <person name="Felber R."/>
            <person name="Schnabl S."/>
            <person name="Hiller R."/>
            <person name="Schmidt W."/>
            <person name="Lecharny A."/>
            <person name="Aubourg S."/>
            <person name="Chefdor F."/>
            <person name="Cooke R."/>
            <person name="Berger C."/>
            <person name="Monfort A."/>
            <person name="Casacuberta E."/>
            <person name="Gibbons T."/>
            <person name="Weber N."/>
            <person name="Vandenbol M."/>
            <person name="Bargues M."/>
            <person name="Terol J."/>
            <person name="Torres A."/>
            <person name="Perez-Perez A."/>
            <person name="Purnelle B."/>
            <person name="Bent E."/>
            <person name="Johnson S."/>
            <person name="Tacon D."/>
            <person name="Jesse T."/>
            <person name="Heijnen L."/>
            <person name="Schwarz S."/>
            <person name="Scholler P."/>
            <person name="Heber S."/>
            <person name="Francs P."/>
            <person name="Bielke C."/>
            <person name="Frishman D."/>
            <person name="Haase D."/>
            <person name="Lemcke K."/>
            <person name="Mewes H.-W."/>
            <person name="Stocker S."/>
            <person name="Zaccaria P."/>
            <person name="Bevan M."/>
            <person name="Wilson R.K."/>
            <person name="de la Bastide M."/>
            <person name="Habermann K."/>
            <person name="Parnell L."/>
            <person name="Dedhia N."/>
            <person name="Gnoj L."/>
            <person name="Schutz K."/>
            <person name="Huang E."/>
            <person name="Spiegel L."/>
            <person name="Sekhon M."/>
            <person name="Murray J."/>
            <person name="Sheet P."/>
            <person name="Cordes M."/>
            <person name="Abu-Threideh J."/>
            <person name="Stoneking T."/>
            <person name="Kalicki J."/>
            <person name="Graves T."/>
            <person name="Harmon G."/>
            <person name="Edwards J."/>
            <person name="Latreille P."/>
            <person name="Courtney L."/>
            <person name="Cloud J."/>
            <person name="Abbott A."/>
            <person name="Scott K."/>
            <person name="Johnson D."/>
            <person name="Minx P."/>
            <person name="Bentley D."/>
            <person name="Fulton B."/>
            <person name="Miller N."/>
            <person name="Greco T."/>
            <person name="Kemp K."/>
            <person name="Kramer J."/>
            <person name="Fulton L."/>
            <person name="Mardis E."/>
            <person name="Dante M."/>
            <person name="Pepin K."/>
            <person name="Hillier L.W."/>
            <person name="Nelson J."/>
            <person name="Spieth J."/>
            <person name="Ryan E."/>
            <person name="Andrews S."/>
            <person name="Geisel C."/>
            <person name="Layman D."/>
            <person name="Du H."/>
            <person name="Ali J."/>
            <person name="Berghoff A."/>
            <person name="Jones K."/>
            <person name="Drone K."/>
            <person name="Cotton M."/>
            <person name="Joshu C."/>
            <person name="Antonoiu B."/>
            <person name="Zidanic M."/>
            <person name="Strong C."/>
            <person name="Sun H."/>
            <person name="Lamar B."/>
            <person name="Yordan C."/>
            <person name="Ma P."/>
            <person name="Zhong J."/>
            <person name="Preston R."/>
            <person name="Vil D."/>
            <person name="Shekher M."/>
            <person name="Matero A."/>
            <person name="Shah R."/>
            <person name="Swaby I.K."/>
            <person name="O'Shaughnessy A."/>
            <person name="Rodriguez M."/>
            <person name="Hoffman J."/>
            <person name="Till S."/>
            <person name="Granat S."/>
            <person name="Shohdy N."/>
            <person name="Hasegawa A."/>
            <person name="Hameed A."/>
            <person name="Lodhi M."/>
            <person name="Johnson A."/>
            <person name="Chen E."/>
            <person name="Marra M.A."/>
            <person name="Martienssen R."/>
            <person name="McCombie W.R."/>
        </authorList>
    </citation>
    <scope>NUCLEOTIDE SEQUENCE [LARGE SCALE GENOMIC DNA]</scope>
    <source>
        <strain>cv. Columbia</strain>
    </source>
</reference>
<reference key="2">
    <citation type="journal article" date="2017" name="Plant J.">
        <title>Araport11: a complete reannotation of the Arabidopsis thaliana reference genome.</title>
        <authorList>
            <person name="Cheng C.Y."/>
            <person name="Krishnakumar V."/>
            <person name="Chan A.P."/>
            <person name="Thibaud-Nissen F."/>
            <person name="Schobel S."/>
            <person name="Town C.D."/>
        </authorList>
    </citation>
    <scope>GENOME REANNOTATION</scope>
    <source>
        <strain>cv. Columbia</strain>
    </source>
</reference>
<reference key="3">
    <citation type="submission" date="2006-07" db="EMBL/GenBank/DDBJ databases">
        <title>Large-scale analysis of RIKEN Arabidopsis full-length (RAFL) cDNAs.</title>
        <authorList>
            <person name="Totoki Y."/>
            <person name="Seki M."/>
            <person name="Ishida J."/>
            <person name="Nakajima M."/>
            <person name="Enju A."/>
            <person name="Kamiya A."/>
            <person name="Narusaka M."/>
            <person name="Shin-i T."/>
            <person name="Nakagawa M."/>
            <person name="Sakamoto N."/>
            <person name="Oishi K."/>
            <person name="Kohara Y."/>
            <person name="Kobayashi M."/>
            <person name="Toyoda A."/>
            <person name="Sakaki Y."/>
            <person name="Sakurai T."/>
            <person name="Iida K."/>
            <person name="Akiyama K."/>
            <person name="Satou M."/>
            <person name="Toyoda T."/>
            <person name="Konagaya A."/>
            <person name="Carninci P."/>
            <person name="Kawai J."/>
            <person name="Hayashizaki Y."/>
            <person name="Shinozaki K."/>
        </authorList>
    </citation>
    <scope>NUCLEOTIDE SEQUENCE [LARGE SCALE MRNA] (ISOFORM 2)</scope>
    <source>
        <strain>cv. Columbia</strain>
    </source>
</reference>
<reference key="4">
    <citation type="journal article" date="2010" name="BMC Genomics">
        <title>Genome-wide cloning and sequence analysis of leucine-rich repeat receptor-like protein kinase genes in Arabidopsis thaliana.</title>
        <authorList>
            <person name="Gou X."/>
            <person name="He K."/>
            <person name="Yang H."/>
            <person name="Yuan T."/>
            <person name="Lin H."/>
            <person name="Clouse S.D."/>
            <person name="Li J."/>
        </authorList>
    </citation>
    <scope>NUCLEOTIDE SEQUENCE [LARGE SCALE MRNA] (ISOFORM 1)</scope>
    <source>
        <strain>cv. Columbia</strain>
    </source>
</reference>
<sequence>MTRDDKFPIVYSLLLIVLLFVSPIYGDGDADALLKFKSSLVNASSLGGWDSGEPPCSGDKGSDSKWKGVMCSNGSVFALRLENMSLSGELDVQALGSIRGLKSISFMRNHFEGKIPRGIDGLVSLAHLYLAHNQFTGEIDGDLFSGMKALLKVHLEGNRFSGEIPESLGKLPKLTELNLEDNMFTGKIPAFKQKNLVTVNVANNQLEGRIPLTLGLMNITFFSGNKGLCGAPLLPCRYTRPPFFTVFLLALTILAVVVLITVFLSVCILSRRQGKGQDQIQNHGVGHFHGQVYGQPEQQQHSEKSSQDSKVYRKLANETVQRDSTATSGAISVGGLSPDEDKRGDQRKLHFVRNDQERFTLQDMLRASAEVLGSGGFGSSYKAALSSGRAVVVKRFRFMSNIGREEFYDHMKKIGRLSHPNLLPLIAFYYRKEEKLLVTNYISNGSLANLLHANRTPGQVVLDWPIRLKIVRGVTRGLAYLYRVFPDLNLPHGHLKSSNVLLDPNFEPLLTDYALVPVVNRDQSQQFMVAYKAPEFTQQDRTSRRSDVWSLGILILEILTGKFPANYLRQGKGADDELAAWVESVARTEWTADVFDKEMKAGKEHEAQMLKLLKIGLRCCDWDIEKRIELHEAVDRIEEVDRDAGGGQESVRSSYVTASDGDHRSSRAMTEEFSLM</sequence>
<gene>
    <name type="ordered locus">At4g31250</name>
    <name type="ORF">F8F16.70</name>
</gene>